<keyword id="KW-0112">Calmodulin-binding</keyword>
<keyword id="KW-0963">Cytoplasm</keyword>
<keyword id="KW-0206">Cytoskeleton</keyword>
<keyword id="KW-0333">Golgi apparatus</keyword>
<keyword id="KW-0597">Phosphoprotein</keyword>
<keyword id="KW-1185">Reference proteome</keyword>
<name>CK5P2_RAT</name>
<sequence length="1903" mass="215482">MMDSGMEEDVTLPGTLSGCSGLHPVLPSDLDVISDTTGLGNGVLPIMSEEKVSPTRARNMKDFENQITELKKENFNLKLRIYFLEERIQQEFAGPTEHIYKKNIELKVEVESLKRELQERDQLLVKASKAVESLAEGGGSEIQRVKEDARKKVQQVEELLTKRIHLLEEDVKAAQAELEKAFAGTETEKALRLSLESKLSAMKKMQEGDLEMTLALEEKDRLIEELKLSLKSKEALIQCLKEEKSQMASPDENVSSGELRGLSATLREEKERDAEERQKERNHFEERIQALQEDLREKEREIATEKKNSLKRDKAIQGLTMALKSKEKEVEELNSIIKELTADSTQSREAPLKTQVSEFEVRESENCEAALAEKEALLAKLHSENVTKNTENHRLLRNVKKVTQELNDLKKEKLRLERDLEEAHREGNRGARTIHDLRNEVEKLRKEVCEREKAVEKHYKSLPGESSSKFHSQEQVVKGLTESASQEDLLLQKSNEKDLEAIQQNCYLMTAEELKFGSDGLITEKCSQQSPDSKLIFSKEKQQSEYEGLTGDLKTEQNVYAHLAKNLQDTDSKLQAELKRVLALRKQLEQDVLAYRNLQTALQEQLSEIRKREEEPFSFYSDQTSYLSICLEEHSQFQLEHFSQEEIKKKVIDLIQLVKDLHADNQHLKKTIFDISCMGVQGNDRLESTKQAELMASKADEDTLKFKADDENHFQSDQHLEQSREIMEDYAEGGGKDGYVRHMDSNILDHDGAHTPDTSEDHSLEDELLSLLATFFSKKATPSLESRPDLLKALGALLLERICLAEQGSPGDHSDSKAEKALEQVAVRLRDELGHSCLANSFSKSHSELKSPRGTWLVKTGDEAKVELKSVSVQTMTIEDSTRGFKPERKREAWAGKPEEAVFSTELESEALGEMPGLQATHLSFPSAIDKDDQKTGLLIQLKTPELLENLYNLPASQEVVAQLQGQVLELQKELKEYKIRNKQLLDKLILAEAMMEGMAVPNSTPVNVPAAQAVVRTAFQGKPGEQEGHETTHSAGRDKEVDSDQYTSFEIDSEICPPDDLALLPACKENLEDFLGPPSIATYLDSKSQLSVKVSVVGTDQSENINLPDDTEALKQKIHDLQTELEGYRNIIVQLQKHSQCSEAIITVLCGTEGAQDGLNKPKGHIDEEEMTFSSLHQVRYVKHMKILRPLTPEIIDGKMLESLKQQLVEQEQELQKEQDLNLELFGEIHNLQNKFRDLSPSRYDSLVQSQARELSLQRQQIKDSHDICVVCHQHMSTMIKAFEELLQASDVDSCVAEGFREQLTQCAGLLEQLEKLFLHGKSARVEPHTQTELLRRLRTEEDNLPYQHLLPESPEPSASHALSDDEMSEKSFLSREPKPDSETEKYPTIASRFPQDLLMEHIQEIRTLRKHLEESIKTNEKLRKQLERQGCETDQGSTNVSAYSSELHNSLTSEIQFLRKQNEALSTMLEKGSKEKQKENEKLRESLARKTESLEHLQLEYASVREENERLRRDISEKERQNQQLTQEVCSSLQELSRVQEEAKSRQQLLLQKDELLQSLQMELKVYEKLAEEHQKLQQESRGEACGGGQKGQDPFSNLHGLLKEIQVLRDQAERSIQTNNTLKSKLEKQLSQGSKQAQEGALTLAVQALSVTEWSLQLDKHDVNKCPEASDNSFDLFESTQAMAPKSASETPVLSGTDVDSLSCDSTSSATSPSCMPCLVAGRHLWASKSGHHMLCLIEDYDALYKQISWGQTLLAKMDIQTQEALSPTSQKLGPKASFSVPLSKFLSSMNTAKLILEKASRLLKLFWRVSVPTNGQCSLHCDQIGEMKAEITKLHKKLFEQEKKLQNTAKLLQQSKHQEKIIFDQLVITHQVLRKARGNLELRPRAAHPGTSSPSRPGS</sequence>
<protein>
    <recommendedName>
        <fullName>CDK5 regulatory subunit-associated protein 2</fullName>
    </recommendedName>
    <alternativeName>
        <fullName>CDK5 activator-binding protein C48</fullName>
    </alternativeName>
</protein>
<comment type="function">
    <text evidence="2 3">Potential regulator of CDK5 activity via its interaction with CDK5R1 (By similarity). Negative regulator of centriole disengagement (licensing) which maintains centriole engagement and cohesion. Involved in regulation of mitotic spindle orientation (By similarity). Plays a role in the spindle checkpoint activation by acting as a transcriptional regulator of both BUBR1 and MAD2 promoter (By similarity). Together with EB1/MAPRE1, may promote microtubule polymerization, bundle formation, growth and dynamics at the plus ends (By similarity). Regulates centrosomal maturation by recruitment of the gamma-tubulin ring complex (gTuRC) onto centrosomes (By similarity). In complex with PDE4DIP isoform 13/MMG8/SMYLE, MAPRE1 and AKAP9, contributes to microtubules nucleation and extension from the centrosome to the cell periphery (By similarity). Required for the recruitment of AKAP9 to centrosomes (By similarity). Plays a role in neurogenesis (By similarity).</text>
</comment>
<comment type="subunit">
    <text evidence="2 3 5 6">Homodimer (By similarity). Interacts with CDK5R1 (p35 form) (PubMed:10721722). CDK5RAP1, CDK5RAP2 and CDK5RAP3 show competitive binding to CDK5R1 (By similarity). May form a complex with CDK5R1 and CDK5 (By similarity). Interacts with pericentrin/PCNT; the interaction is leading to centrosomal and Golgi localization of CDK5RAP2 and PCNT (By similarity). Interacts with AKAP9; the interaction targets CDK5RAP2 and AKAP9 to Golgi apparatus (By similarity). Interacts with TUBG1; the interaction is leading to the centrosomal localization of CDK5RAP2 and TUBG1 (By similarity). Interacts with TUBGCP3 (By similarity). Interacts with CALM1 (By similarity). Interacts with CDC20 (By similarity). Interacts with CEP68; degradation of CEP68 in early mitosis leads to removal of CDK5RAP2 from the centrosome which promotes centriole disengagement and subsequent centriole separation (By similarity). Interacts with NCKAP5L (By similarity). Interacts with LGALS3BP; this interaction may connect the pericentrosomal complex to the gamma-tubulin ring complex (gTuRC) to promote microtubule assembly and acetylation (By similarity). Contrary to human, chimpanzee, bovine and dog orthologous proteins, does not interact with EB1/MAPRE1, possibly due to a divergence at the level of the critical residue 939, which is a proline in MAPRE1-binding orthologs and a leucine in mouse and rat (Probable). Interacts with CCDC66 (By similarity). Associates (via CM1 motif) with TUBGCP2 of the gTuRC; the interaction plays a role in gTuRC activation (By similarity).</text>
</comment>
<comment type="subcellular location">
    <subcellularLocation>
        <location evidence="2">Cytoplasm</location>
        <location evidence="2">Cytoskeleton</location>
        <location evidence="2">Microtubule organizing center</location>
        <location evidence="2">Centrosome</location>
    </subcellularLocation>
    <subcellularLocation>
        <location evidence="3">Golgi apparatus</location>
    </subcellularLocation>
    <subcellularLocation>
        <location evidence="3">Cytoplasm</location>
    </subcellularLocation>
    <text evidence="3 6">Found in the pericentriolar region adhering to the surface of the centrosome and in the region of the centrosomal appendages. Localization to centrosomes versus Golgi apparatus may be cell type-dependent. Due to the probable lack of interaction with EB1/MAPRE1, its localization to microtubule plus ends may not be conserved in rats.</text>
</comment>
<comment type="PTM">
    <text evidence="5">Phosphorylated in vitro by CDK5.</text>
</comment>
<organism>
    <name type="scientific">Rattus norvegicus</name>
    <name type="common">Rat</name>
    <dbReference type="NCBI Taxonomy" id="10116"/>
    <lineage>
        <taxon>Eukaryota</taxon>
        <taxon>Metazoa</taxon>
        <taxon>Chordata</taxon>
        <taxon>Craniata</taxon>
        <taxon>Vertebrata</taxon>
        <taxon>Euteleostomi</taxon>
        <taxon>Mammalia</taxon>
        <taxon>Eutheria</taxon>
        <taxon>Euarchontoglires</taxon>
        <taxon>Glires</taxon>
        <taxon>Rodentia</taxon>
        <taxon>Myomorpha</taxon>
        <taxon>Muroidea</taxon>
        <taxon>Muridae</taxon>
        <taxon>Murinae</taxon>
        <taxon>Rattus</taxon>
    </lineage>
</organism>
<reference key="1">
    <citation type="submission" date="2012-08" db="EMBL/GenBank/DDBJ databases">
        <title>Human and rat express full length and alternatively spliced variant 1 of cdk5rap2.</title>
        <authorList>
            <person name="Park J.S.Y."/>
            <person name="Lee M.-K.R."/>
            <person name="Jin Y."/>
            <person name="Fu S.-B."/>
            <person name="Rosales J.L."/>
            <person name="Lee K.-Y."/>
        </authorList>
    </citation>
    <scope>NUCLEOTIDE SEQUENCE [MRNA]</scope>
    <source>
        <strain>Brown Norway</strain>
    </source>
</reference>
<reference key="2">
    <citation type="journal article" date="2000" name="Gene">
        <title>Cloning of three novel neuronal Cdk5 activator binding proteins.</title>
        <authorList>
            <person name="Ching Y.-P."/>
            <person name="Qi Z."/>
            <person name="Wang J.H."/>
        </authorList>
    </citation>
    <scope>NUCLEOTIDE SEQUENCE [MRNA] OF 1686-1903</scope>
    <scope>INTERACTION WITH CDK5R1</scope>
    <scope>PHOSPHORYLATION</scope>
    <source>
        <tissue>Brain</tissue>
    </source>
</reference>
<reference key="3">
    <citation type="journal article" date="2009" name="Mol. Biol. Cell">
        <title>Interaction of CDK5RAP2 with EB1 to track growing microtubule tips and to regulate microtubule dynamics.</title>
        <authorList>
            <person name="Fong K.W."/>
            <person name="Hau S.Y."/>
            <person name="Kho Y.S."/>
            <person name="Jia Y."/>
            <person name="He L."/>
            <person name="Qi R.Z."/>
        </authorList>
    </citation>
    <scope>LACK OF INTERACTION WITH MAPRE1</scope>
</reference>
<reference key="4">
    <citation type="journal article" date="2012" name="Nat. Commun.">
        <title>Quantitative maps of protein phosphorylation sites across 14 different rat organs and tissues.</title>
        <authorList>
            <person name="Lundby A."/>
            <person name="Secher A."/>
            <person name="Lage K."/>
            <person name="Nordsborg N.B."/>
            <person name="Dmytriyev A."/>
            <person name="Lundby C."/>
            <person name="Olsen J.V."/>
        </authorList>
    </citation>
    <scope>PHOSPHORYLATION [LARGE SCALE ANALYSIS] AT SER-485; THR-1193; SER-1241; SER-1495; SER-1673 AND SER-1676</scope>
    <scope>IDENTIFICATION BY MASS SPECTROMETRY [LARGE SCALE ANALYSIS]</scope>
</reference>
<dbReference type="EMBL" id="JX524852">
    <property type="protein sequence ID" value="AFV70628.1"/>
    <property type="molecule type" value="mRNA"/>
</dbReference>
<dbReference type="EMBL" id="AF177478">
    <property type="protein sequence ID" value="AAF60224.1"/>
    <property type="molecule type" value="mRNA"/>
</dbReference>
<dbReference type="SMR" id="Q9JLH5"/>
<dbReference type="FunCoup" id="Q9JLH5">
    <property type="interactions" value="2919"/>
</dbReference>
<dbReference type="IntAct" id="Q9JLH5">
    <property type="interactions" value="2"/>
</dbReference>
<dbReference type="STRING" id="10116.ENSRNOP00000073851"/>
<dbReference type="iPTMnet" id="Q9JLH5"/>
<dbReference type="PhosphoSitePlus" id="Q9JLH5"/>
<dbReference type="PaxDb" id="10116-ENSRNOP00000007710"/>
<dbReference type="PeptideAtlas" id="Q9JLH5"/>
<dbReference type="Ensembl" id="ENSRNOT00000007710.7">
    <property type="protein sequence ID" value="ENSRNOP00000007710.7"/>
    <property type="gene ID" value="ENSRNOG00000005788.8"/>
</dbReference>
<dbReference type="UCSC" id="RGD:708451">
    <property type="organism name" value="rat"/>
</dbReference>
<dbReference type="AGR" id="RGD:708451"/>
<dbReference type="RGD" id="708451">
    <property type="gene designation" value="Cdk5rap2"/>
</dbReference>
<dbReference type="eggNOG" id="ENOG502QTI7">
    <property type="taxonomic scope" value="Eukaryota"/>
</dbReference>
<dbReference type="GeneTree" id="ENSGT00950000183190"/>
<dbReference type="InParanoid" id="Q9JLH5"/>
<dbReference type="OMA" id="CGQIGEM"/>
<dbReference type="PhylomeDB" id="Q9JLH5"/>
<dbReference type="Reactome" id="R-RNO-2565942">
    <property type="pathway name" value="Regulation of PLK1 Activity at G2/M Transition"/>
</dbReference>
<dbReference type="Reactome" id="R-RNO-380259">
    <property type="pathway name" value="Loss of Nlp from mitotic centrosomes"/>
</dbReference>
<dbReference type="Reactome" id="R-RNO-380270">
    <property type="pathway name" value="Recruitment of mitotic centrosome proteins and complexes"/>
</dbReference>
<dbReference type="Reactome" id="R-RNO-380284">
    <property type="pathway name" value="Loss of proteins required for interphase microtubule organization from the centrosome"/>
</dbReference>
<dbReference type="Reactome" id="R-RNO-380320">
    <property type="pathway name" value="Recruitment of NuMA to mitotic centrosomes"/>
</dbReference>
<dbReference type="Reactome" id="R-RNO-5620912">
    <property type="pathway name" value="Anchoring of the basal body to the plasma membrane"/>
</dbReference>
<dbReference type="Reactome" id="R-RNO-8854518">
    <property type="pathway name" value="AURKA Activation by TPX2"/>
</dbReference>
<dbReference type="PRO" id="PR:Q9JLH5"/>
<dbReference type="Proteomes" id="UP000002494">
    <property type="component" value="Chromosome 5"/>
</dbReference>
<dbReference type="GO" id="GO:0030054">
    <property type="term" value="C:cell junction"/>
    <property type="evidence" value="ECO:0007669"/>
    <property type="project" value="Ensembl"/>
</dbReference>
<dbReference type="GO" id="GO:0005813">
    <property type="term" value="C:centrosome"/>
    <property type="evidence" value="ECO:0000250"/>
    <property type="project" value="UniProtKB"/>
</dbReference>
<dbReference type="GO" id="GO:0036064">
    <property type="term" value="C:ciliary basal body"/>
    <property type="evidence" value="ECO:0007669"/>
    <property type="project" value="Ensembl"/>
</dbReference>
<dbReference type="GO" id="GO:0005737">
    <property type="term" value="C:cytoplasm"/>
    <property type="evidence" value="ECO:0000250"/>
    <property type="project" value="UniProtKB"/>
</dbReference>
<dbReference type="GO" id="GO:0005829">
    <property type="term" value="C:cytosol"/>
    <property type="evidence" value="ECO:0007669"/>
    <property type="project" value="Ensembl"/>
</dbReference>
<dbReference type="GO" id="GO:0000931">
    <property type="term" value="C:gamma-tubulin ring complex"/>
    <property type="evidence" value="ECO:0000266"/>
    <property type="project" value="RGD"/>
</dbReference>
<dbReference type="GO" id="GO:0005794">
    <property type="term" value="C:Golgi apparatus"/>
    <property type="evidence" value="ECO:0000250"/>
    <property type="project" value="UniProtKB"/>
</dbReference>
<dbReference type="GO" id="GO:0005874">
    <property type="term" value="C:microtubule"/>
    <property type="evidence" value="ECO:0000250"/>
    <property type="project" value="UniProtKB"/>
</dbReference>
<dbReference type="GO" id="GO:0035371">
    <property type="term" value="C:microtubule plus-end"/>
    <property type="evidence" value="ECO:0000250"/>
    <property type="project" value="UniProtKB"/>
</dbReference>
<dbReference type="GO" id="GO:0097431">
    <property type="term" value="C:mitotic spindle pole"/>
    <property type="evidence" value="ECO:0000266"/>
    <property type="project" value="RGD"/>
</dbReference>
<dbReference type="GO" id="GO:0000242">
    <property type="term" value="C:pericentriolar material"/>
    <property type="evidence" value="ECO:0000250"/>
    <property type="project" value="UniProtKB"/>
</dbReference>
<dbReference type="GO" id="GO:0048471">
    <property type="term" value="C:perinuclear region of cytoplasm"/>
    <property type="evidence" value="ECO:0000250"/>
    <property type="project" value="UniProtKB"/>
</dbReference>
<dbReference type="GO" id="GO:0000922">
    <property type="term" value="C:spindle pole"/>
    <property type="evidence" value="ECO:0000250"/>
    <property type="project" value="UniProtKB"/>
</dbReference>
<dbReference type="GO" id="GO:0005516">
    <property type="term" value="F:calmodulin binding"/>
    <property type="evidence" value="ECO:0000250"/>
    <property type="project" value="UniProtKB"/>
</dbReference>
<dbReference type="GO" id="GO:0043015">
    <property type="term" value="F:gamma-tubulin binding"/>
    <property type="evidence" value="ECO:0000266"/>
    <property type="project" value="RGD"/>
</dbReference>
<dbReference type="GO" id="GO:0008017">
    <property type="term" value="F:microtubule binding"/>
    <property type="evidence" value="ECO:0000266"/>
    <property type="project" value="RGD"/>
</dbReference>
<dbReference type="GO" id="GO:0019901">
    <property type="term" value="F:protein kinase binding"/>
    <property type="evidence" value="ECO:0000250"/>
    <property type="project" value="UniProtKB"/>
</dbReference>
<dbReference type="GO" id="GO:0044877">
    <property type="term" value="F:protein-containing complex binding"/>
    <property type="evidence" value="ECO:0000314"/>
    <property type="project" value="RGD"/>
</dbReference>
<dbReference type="GO" id="GO:0000976">
    <property type="term" value="F:transcription cis-regulatory region binding"/>
    <property type="evidence" value="ECO:0000250"/>
    <property type="project" value="UniProtKB"/>
</dbReference>
<dbReference type="GO" id="GO:0015631">
    <property type="term" value="F:tubulin binding"/>
    <property type="evidence" value="ECO:0000266"/>
    <property type="project" value="RGD"/>
</dbReference>
<dbReference type="GO" id="GO:0007420">
    <property type="term" value="P:brain development"/>
    <property type="evidence" value="ECO:0000250"/>
    <property type="project" value="UniProtKB"/>
</dbReference>
<dbReference type="GO" id="GO:0007099">
    <property type="term" value="P:centriole replication"/>
    <property type="evidence" value="ECO:0000266"/>
    <property type="project" value="RGD"/>
</dbReference>
<dbReference type="GO" id="GO:0007098">
    <property type="term" value="P:centrosome cycle"/>
    <property type="evidence" value="ECO:0000250"/>
    <property type="project" value="UniProtKB"/>
</dbReference>
<dbReference type="GO" id="GO:0007059">
    <property type="term" value="P:chromosome segregation"/>
    <property type="evidence" value="ECO:0000250"/>
    <property type="project" value="UniProtKB"/>
</dbReference>
<dbReference type="GO" id="GO:0000132">
    <property type="term" value="P:establishment of mitotic spindle orientation"/>
    <property type="evidence" value="ECO:0000250"/>
    <property type="project" value="UniProtKB"/>
</dbReference>
<dbReference type="GO" id="GO:0001578">
    <property type="term" value="P:microtubule bundle formation"/>
    <property type="evidence" value="ECO:0000250"/>
    <property type="project" value="UniProtKB"/>
</dbReference>
<dbReference type="GO" id="GO:0000226">
    <property type="term" value="P:microtubule cytoskeleton organization"/>
    <property type="evidence" value="ECO:0000250"/>
    <property type="project" value="UniProtKB"/>
</dbReference>
<dbReference type="GO" id="GO:0031023">
    <property type="term" value="P:microtubule organizing center organization"/>
    <property type="evidence" value="ECO:0000250"/>
    <property type="project" value="UniProtKB"/>
</dbReference>
<dbReference type="GO" id="GO:0046600">
    <property type="term" value="P:negative regulation of centriole replication"/>
    <property type="evidence" value="ECO:0000250"/>
    <property type="project" value="UniProtKB"/>
</dbReference>
<dbReference type="GO" id="GO:0045665">
    <property type="term" value="P:negative regulation of neuron differentiation"/>
    <property type="evidence" value="ECO:0000266"/>
    <property type="project" value="RGD"/>
</dbReference>
<dbReference type="GO" id="GO:0022008">
    <property type="term" value="P:neurogenesis"/>
    <property type="evidence" value="ECO:0000250"/>
    <property type="project" value="UniProtKB"/>
</dbReference>
<dbReference type="GO" id="GO:0045893">
    <property type="term" value="P:positive regulation of DNA-templated transcription"/>
    <property type="evidence" value="ECO:0000250"/>
    <property type="project" value="UniProtKB"/>
</dbReference>
<dbReference type="GO" id="GO:0031116">
    <property type="term" value="P:positive regulation of microtubule polymerization"/>
    <property type="evidence" value="ECO:0000266"/>
    <property type="project" value="RGD"/>
</dbReference>
<dbReference type="GO" id="GO:0090266">
    <property type="term" value="P:regulation of mitotic cell cycle spindle assembly checkpoint"/>
    <property type="evidence" value="ECO:0000250"/>
    <property type="project" value="UniProtKB"/>
</dbReference>
<dbReference type="InterPro" id="IPR056273">
    <property type="entry name" value="CC_CDK5RAP2_MYOME"/>
</dbReference>
<dbReference type="InterPro" id="IPR042791">
    <property type="entry name" value="CDK5RAP2"/>
</dbReference>
<dbReference type="InterPro" id="IPR012943">
    <property type="entry name" value="Cnn_1N"/>
</dbReference>
<dbReference type="PANTHER" id="PTHR46930">
    <property type="entry name" value="CDK5 REGULATORY SUBUNIT-ASSOCIATED PROTEIN 2"/>
    <property type="match status" value="1"/>
</dbReference>
<dbReference type="PANTHER" id="PTHR46930:SF1">
    <property type="entry name" value="CDK5 REGULATORY SUBUNIT-ASSOCIATED PROTEIN 2"/>
    <property type="match status" value="1"/>
</dbReference>
<dbReference type="Pfam" id="PF23246">
    <property type="entry name" value="CC_CDK5RAP2"/>
    <property type="match status" value="1"/>
</dbReference>
<dbReference type="Pfam" id="PF07989">
    <property type="entry name" value="Cnn_1N"/>
    <property type="match status" value="1"/>
</dbReference>
<proteinExistence type="evidence at protein level"/>
<feature type="chain" id="PRO_0000089838" description="CDK5 regulatory subunit-associated protein 2">
    <location>
        <begin position="1"/>
        <end position="1903"/>
    </location>
</feature>
<feature type="region of interest" description="CM1 motif; interacts with the gTuRC" evidence="3">
    <location>
        <begin position="51"/>
        <end position="94"/>
    </location>
</feature>
<feature type="region of interest" description="Disordered" evidence="4">
    <location>
        <begin position="244"/>
        <end position="282"/>
    </location>
</feature>
<feature type="region of interest" description="Disordered" evidence="4">
    <location>
        <begin position="1022"/>
        <end position="1044"/>
    </location>
</feature>
<feature type="region of interest" description="Disordered" evidence="4">
    <location>
        <begin position="1349"/>
        <end position="1387"/>
    </location>
</feature>
<feature type="region of interest" description="Required for centrosomal attachment, Golgi localization and CALM1 interaction" evidence="1">
    <location>
        <begin position="1736"/>
        <end position="1903"/>
    </location>
</feature>
<feature type="region of interest" description="Interaction with CDK5R1" evidence="5">
    <location>
        <begin position="1736"/>
        <end position="1778"/>
    </location>
</feature>
<feature type="region of interest" description="Required for centrosomal attachment, Golgi localization and CALM1 interaction" evidence="1">
    <location>
        <begin position="1871"/>
        <end position="1880"/>
    </location>
</feature>
<feature type="region of interest" description="Disordered" evidence="4">
    <location>
        <begin position="1883"/>
        <end position="1903"/>
    </location>
</feature>
<feature type="compositionally biased region" description="Polar residues" evidence="4">
    <location>
        <begin position="246"/>
        <end position="256"/>
    </location>
</feature>
<feature type="compositionally biased region" description="Basic and acidic residues" evidence="4">
    <location>
        <begin position="266"/>
        <end position="282"/>
    </location>
</feature>
<feature type="compositionally biased region" description="Basic and acidic residues" evidence="4">
    <location>
        <begin position="1025"/>
        <end position="1043"/>
    </location>
</feature>
<feature type="compositionally biased region" description="Basic and acidic residues" evidence="4">
    <location>
        <begin position="1370"/>
        <end position="1387"/>
    </location>
</feature>
<feature type="compositionally biased region" description="Polar residues" evidence="4">
    <location>
        <begin position="1894"/>
        <end position="1903"/>
    </location>
</feature>
<feature type="modified residue" description="Phosphoserine" evidence="7">
    <location>
        <position position="485"/>
    </location>
</feature>
<feature type="modified residue" description="Phosphoserine" evidence="3">
    <location>
        <position position="544"/>
    </location>
</feature>
<feature type="modified residue" description="Phosphothreonine" evidence="7">
    <location>
        <position position="1193"/>
    </location>
</feature>
<feature type="modified residue" description="Phosphoserine" evidence="7">
    <location>
        <position position="1241"/>
    </location>
</feature>
<feature type="modified residue" description="Phosphoserine" evidence="2">
    <location>
        <position position="1243"/>
    </location>
</feature>
<feature type="modified residue" description="Phosphoserine" evidence="7">
    <location>
        <position position="1495"/>
    </location>
</feature>
<feature type="modified residue" description="Phosphoserine" evidence="7">
    <location>
        <position position="1673"/>
    </location>
</feature>
<feature type="modified residue" description="Phosphoserine" evidence="7">
    <location>
        <position position="1676"/>
    </location>
</feature>
<feature type="modified residue" description="Phosphoserine" evidence="3">
    <location>
        <position position="1903"/>
    </location>
</feature>
<evidence type="ECO:0000250" key="1"/>
<evidence type="ECO:0000250" key="2">
    <source>
        <dbReference type="UniProtKB" id="Q8K389"/>
    </source>
</evidence>
<evidence type="ECO:0000250" key="3">
    <source>
        <dbReference type="UniProtKB" id="Q96SN8"/>
    </source>
</evidence>
<evidence type="ECO:0000256" key="4">
    <source>
        <dbReference type="SAM" id="MobiDB-lite"/>
    </source>
</evidence>
<evidence type="ECO:0000269" key="5">
    <source>
    </source>
</evidence>
<evidence type="ECO:0000305" key="6">
    <source>
    </source>
</evidence>
<evidence type="ECO:0007744" key="7">
    <source>
    </source>
</evidence>
<gene>
    <name type="primary">Cdk5rap2</name>
</gene>
<accession>Q9JLH5</accession>
<accession>K7QQW0</accession>